<name>DAG_ANTMA</name>
<protein>
    <recommendedName>
        <fullName>DAG protein, chloroplastic</fullName>
    </recommendedName>
</protein>
<organism>
    <name type="scientific">Antirrhinum majus</name>
    <name type="common">Garden snapdragon</name>
    <dbReference type="NCBI Taxonomy" id="4151"/>
    <lineage>
        <taxon>Eukaryota</taxon>
        <taxon>Viridiplantae</taxon>
        <taxon>Streptophyta</taxon>
        <taxon>Embryophyta</taxon>
        <taxon>Tracheophyta</taxon>
        <taxon>Spermatophyta</taxon>
        <taxon>Magnoliopsida</taxon>
        <taxon>eudicotyledons</taxon>
        <taxon>Gunneridae</taxon>
        <taxon>Pentapetalae</taxon>
        <taxon>asterids</taxon>
        <taxon>lamiids</taxon>
        <taxon>Lamiales</taxon>
        <taxon>Plantaginaceae</taxon>
        <taxon>Antirrhineae</taxon>
        <taxon>Antirrhinum</taxon>
    </lineage>
</organism>
<keyword id="KW-0150">Chloroplast</keyword>
<keyword id="KW-0934">Plastid</keyword>
<keyword id="KW-0809">Transit peptide</keyword>
<sequence length="230" mass="25852">MATINLSLLPKTLTPNSKTLAPLLSILSTSSLSFLPCTRPHPIKSRSAAYPTVRALTDGEYSSRRNNNNNNSGEERETIMLPGCDYNHWLIVMEFPKDPAPTREQMIDTYLNTLATVLGSMEEAKKNMYAFSTTTYTGFQCTVTEETSEKFKGLPGVLWVLPDSYIDVKNKDYGGDKYVNGEIIPCQYPTYQPKQSRSSKYKSKAYVRQRDGPPAEQRRPKQEATPESST</sequence>
<feature type="transit peptide" description="Chloroplast" evidence="1">
    <location>
        <begin position="1"/>
        <end position="55"/>
    </location>
</feature>
<feature type="chain" id="PRO_0000021071" description="DAG protein, chloroplastic">
    <location>
        <begin position="56"/>
        <end position="230"/>
    </location>
</feature>
<feature type="region of interest" description="Disordered" evidence="2">
    <location>
        <begin position="189"/>
        <end position="230"/>
    </location>
</feature>
<feature type="compositionally biased region" description="Basic residues" evidence="2">
    <location>
        <begin position="197"/>
        <end position="207"/>
    </location>
</feature>
<feature type="compositionally biased region" description="Basic and acidic residues" evidence="2">
    <location>
        <begin position="208"/>
        <end position="224"/>
    </location>
</feature>
<evidence type="ECO:0000255" key="1"/>
<evidence type="ECO:0000256" key="2">
    <source>
        <dbReference type="SAM" id="MobiDB-lite"/>
    </source>
</evidence>
<gene>
    <name type="primary">DAG</name>
</gene>
<accession>Q38732</accession>
<comment type="function">
    <text>Acts very early in chloroplast development, being required for expression of RNA polymerase beta subunit gene, and hence indirectly for subsequent expression of CAB and RBCS genes.</text>
</comment>
<comment type="subcellular location">
    <subcellularLocation>
        <location>Plastid</location>
        <location>Chloroplast</location>
    </subcellularLocation>
</comment>
<comment type="tissue specificity">
    <text>Expressed in leaves, flowers including petals, and to a low level in roots.</text>
</comment>
<comment type="miscellaneous">
    <text>Expression detected in the dark, but enhanced by light.</text>
</comment>
<dbReference type="EMBL" id="X95753">
    <property type="protein sequence ID" value="CAA65064.1"/>
    <property type="molecule type" value="mRNA"/>
</dbReference>
<dbReference type="PIR" id="S71747">
    <property type="entry name" value="S71747"/>
</dbReference>
<dbReference type="SMR" id="Q38732"/>
<dbReference type="GO" id="GO:0009507">
    <property type="term" value="C:chloroplast"/>
    <property type="evidence" value="ECO:0007669"/>
    <property type="project" value="UniProtKB-SubCell"/>
</dbReference>
<dbReference type="GO" id="GO:1900865">
    <property type="term" value="P:chloroplast RNA modification"/>
    <property type="evidence" value="ECO:0007669"/>
    <property type="project" value="TreeGrafter"/>
</dbReference>
<dbReference type="GO" id="GO:0016554">
    <property type="term" value="P:cytidine to uridine editing"/>
    <property type="evidence" value="ECO:0007669"/>
    <property type="project" value="InterPro"/>
</dbReference>
<dbReference type="FunFam" id="3.30.70.80:FF:000001">
    <property type="entry name" value="Multiple organellar RNA editing factor"/>
    <property type="match status" value="1"/>
</dbReference>
<dbReference type="Gene3D" id="3.30.70.80">
    <property type="entry name" value="Peptidase S8 propeptide/proteinase inhibitor I9"/>
    <property type="match status" value="1"/>
</dbReference>
<dbReference type="InterPro" id="IPR039206">
    <property type="entry name" value="MORF/ORRM1/DAG-like"/>
</dbReference>
<dbReference type="InterPro" id="IPR054059">
    <property type="entry name" value="MORF/ORRM1/DAG-like_MORF"/>
</dbReference>
<dbReference type="InterPro" id="IPR037045">
    <property type="entry name" value="S8pro/Inhibitor_I9_sf"/>
</dbReference>
<dbReference type="PANTHER" id="PTHR31346">
    <property type="entry name" value="MULTIPLE ORGANELLAR RNA EDITING FACTOR 2, CHLOROPLASTIC-RELATED-RELATED"/>
    <property type="match status" value="1"/>
</dbReference>
<dbReference type="PANTHER" id="PTHR31346:SF3">
    <property type="entry name" value="MULTIPLE ORGANELLAR RNA EDITING FACTOR 9, CHLOROPLASTIC"/>
    <property type="match status" value="1"/>
</dbReference>
<dbReference type="Pfam" id="PF21864">
    <property type="entry name" value="MORF_dom"/>
    <property type="match status" value="1"/>
</dbReference>
<proteinExistence type="evidence at transcript level"/>
<reference key="1">
    <citation type="journal article" date="1996" name="EMBO J.">
        <title>DAG, a gene required for chloroplast differentiation and palisade development in Antirrhinum majus.</title>
        <authorList>
            <person name="Chatterjee M."/>
            <person name="Sparvoli S."/>
            <person name="Edmunds C."/>
            <person name="Garosi P."/>
            <person name="Findlay K."/>
            <person name="Martin C."/>
        </authorList>
    </citation>
    <scope>NUCLEOTIDE SEQUENCE [MRNA]</scope>
    <source>
        <tissue>Leaf</tissue>
    </source>
</reference>